<accession>P0C7Z8</accession>
<proteinExistence type="inferred from homology"/>
<feature type="peptide" id="PRO_0000345051" description="Phenol-soluble modulin alpha 2 peptide">
    <location>
        <begin position="1"/>
        <end position="21"/>
    </location>
</feature>
<comment type="function">
    <text evidence="1">Peptide which can recruit, activate and subsequently lyse human neutrophils, thus eliminating the main cellular defense against infection.</text>
</comment>
<comment type="similarity">
    <text evidence="2">Belongs to the phenol-soluble modulin alpha peptides family.</text>
</comment>
<keyword id="KW-0204">Cytolysis</keyword>
<keyword id="KW-0843">Virulence</keyword>
<evidence type="ECO:0000250" key="1">
    <source>
        <dbReference type="UniProtKB" id="A9JX06"/>
    </source>
</evidence>
<evidence type="ECO:0000305" key="2"/>
<reference key="1">
    <citation type="journal article" date="2001" name="Lancet">
        <title>Whole genome sequencing of meticillin-resistant Staphylococcus aureus.</title>
        <authorList>
            <person name="Kuroda M."/>
            <person name="Ohta T."/>
            <person name="Uchiyama I."/>
            <person name="Baba T."/>
            <person name="Yuzawa H."/>
            <person name="Kobayashi I."/>
            <person name="Cui L."/>
            <person name="Oguchi A."/>
            <person name="Aoki K."/>
            <person name="Nagai Y."/>
            <person name="Lian J.-Q."/>
            <person name="Ito T."/>
            <person name="Kanamori M."/>
            <person name="Matsumaru H."/>
            <person name="Maruyama A."/>
            <person name="Murakami H."/>
            <person name="Hosoyama A."/>
            <person name="Mizutani-Ui Y."/>
            <person name="Takahashi N.K."/>
            <person name="Sawano T."/>
            <person name="Inoue R."/>
            <person name="Kaito C."/>
            <person name="Sekimizu K."/>
            <person name="Hirakawa H."/>
            <person name="Kuhara S."/>
            <person name="Goto S."/>
            <person name="Yabuzaki J."/>
            <person name="Kanehisa M."/>
            <person name="Yamashita A."/>
            <person name="Oshima K."/>
            <person name="Furuya K."/>
            <person name="Yoshino C."/>
            <person name="Shiba T."/>
            <person name="Hattori M."/>
            <person name="Ogasawara N."/>
            <person name="Hayashi H."/>
            <person name="Hiramatsu K."/>
        </authorList>
    </citation>
    <scope>NUCLEOTIDE SEQUENCE [LARGE SCALE GENOMIC DNA]</scope>
    <source>
        <strain>Mu50 / ATCC 700699</strain>
    </source>
</reference>
<organism>
    <name type="scientific">Staphylococcus aureus (strain Mu50 / ATCC 700699)</name>
    <dbReference type="NCBI Taxonomy" id="158878"/>
    <lineage>
        <taxon>Bacteria</taxon>
        <taxon>Bacillati</taxon>
        <taxon>Bacillota</taxon>
        <taxon>Bacilli</taxon>
        <taxon>Bacillales</taxon>
        <taxon>Staphylococcaceae</taxon>
        <taxon>Staphylococcus</taxon>
    </lineage>
</organism>
<gene>
    <name type="primary">psmA2</name>
    <name type="ordered locus">SAV0451.3</name>
</gene>
<protein>
    <recommendedName>
        <fullName>Phenol-soluble modulin alpha 2 peptide</fullName>
    </recommendedName>
</protein>
<name>PSMA2_STAAM</name>
<dbReference type="EMBL" id="BA000017">
    <property type="status" value="NOT_ANNOTATED_CDS"/>
    <property type="molecule type" value="Genomic_DNA"/>
</dbReference>
<dbReference type="Proteomes" id="UP000002481">
    <property type="component" value="Chromosome"/>
</dbReference>
<dbReference type="GO" id="GO:0031640">
    <property type="term" value="P:killing of cells of another organism"/>
    <property type="evidence" value="ECO:0007669"/>
    <property type="project" value="UniProtKB-KW"/>
</dbReference>
<dbReference type="InterPro" id="IPR031429">
    <property type="entry name" value="PSM_alpha"/>
</dbReference>
<dbReference type="NCBIfam" id="NF033425">
    <property type="entry name" value="PSM_alpha_1_2"/>
    <property type="match status" value="1"/>
</dbReference>
<dbReference type="Pfam" id="PF17063">
    <property type="entry name" value="PSMalpha"/>
    <property type="match status" value="1"/>
</dbReference>
<sequence>MGIIAGIIKFIKGLIEKFTGK</sequence>